<sequence length="360" mass="40593">MNAPLCGIWLWLPLLLTWLTPEVSSSWWYMRATSGSSRVMCDNVPGLVSRQRQLCHRHPDVMRAIGLGVAEWTAECQHQFRQHRWNCNTLDRDHSLFGRVLLRSSRESAFVYAISSAGVVFAITRACSQGELKSCSCDPKKKGTAKDSKGTFDWGGCSDNIDYGIKFARAFVDAKERKGKDARALMNLHNNRAGRKAVKRFLKQECKCHGVSGSCTLRTCWLAMADFRKTGSYLWRKYNGAIQVVMNQDGTGFTVANKRFKKPTKNDLVYFENSPDYCIRDREAGSLGTAGRVCNLTSRGMDSCEVMCCGRGYDTSRVTRMTKCECKFHWCCAVRCQDCLEALDVHTCKAPKNADWTTPT</sequence>
<evidence type="ECO:0000250" key="1">
    <source>
        <dbReference type="UniProtKB" id="P09544"/>
    </source>
</evidence>
<evidence type="ECO:0000250" key="2">
    <source>
        <dbReference type="UniProtKB" id="P21552"/>
    </source>
</evidence>
<evidence type="ECO:0000250" key="3">
    <source>
        <dbReference type="UniProtKB" id="P28026"/>
    </source>
</evidence>
<evidence type="ECO:0000250" key="4">
    <source>
        <dbReference type="UniProtKB" id="P56704"/>
    </source>
</evidence>
<evidence type="ECO:0000255" key="5"/>
<evidence type="ECO:0000305" key="6"/>
<name>WNT2_OTOGA</name>
<reference key="1">
    <citation type="submission" date="2011-03" db="EMBL/GenBank/DDBJ databases">
        <title>Version 3 of the genome sequence of Otolemur garnettii(Bushbaby).</title>
        <authorList>
            <consortium name="The Broad Institute Genome Sequencing Platform"/>
            <person name="Di Palma F."/>
            <person name="Johnson J."/>
            <person name="Lander E.S."/>
            <person name="Lindblad-Toh K."/>
            <person name="Jaffe D.B."/>
            <person name="Gnerre S."/>
            <person name="MacCallum I."/>
            <person name="Przybylski D."/>
            <person name="Ribeiro F.J."/>
            <person name="Burton J.N."/>
            <person name="Walker B.J."/>
            <person name="Sharpe T."/>
            <person name="Hall G."/>
        </authorList>
    </citation>
    <scope>NUCLEOTIDE SEQUENCE [LARGE SCALE GENOMIC DNA]</scope>
</reference>
<protein>
    <recommendedName>
        <fullName>Protein Wnt-2</fullName>
    </recommendedName>
</protein>
<keyword id="KW-0217">Developmental protein</keyword>
<keyword id="KW-1015">Disulfide bond</keyword>
<keyword id="KW-0272">Extracellular matrix</keyword>
<keyword id="KW-0325">Glycoprotein</keyword>
<keyword id="KW-0449">Lipoprotein</keyword>
<keyword id="KW-1185">Reference proteome</keyword>
<keyword id="KW-0964">Secreted</keyword>
<keyword id="KW-0732">Signal</keyword>
<keyword id="KW-0879">Wnt signaling pathway</keyword>
<accession>Q2QLH2</accession>
<organism>
    <name type="scientific">Otolemur garnettii</name>
    <name type="common">Small-eared galago</name>
    <name type="synonym">Garnett's greater bushbaby</name>
    <dbReference type="NCBI Taxonomy" id="30611"/>
    <lineage>
        <taxon>Eukaryota</taxon>
        <taxon>Metazoa</taxon>
        <taxon>Chordata</taxon>
        <taxon>Craniata</taxon>
        <taxon>Vertebrata</taxon>
        <taxon>Euteleostomi</taxon>
        <taxon>Mammalia</taxon>
        <taxon>Eutheria</taxon>
        <taxon>Euarchontoglires</taxon>
        <taxon>Primates</taxon>
        <taxon>Strepsirrhini</taxon>
        <taxon>Lorisiformes</taxon>
        <taxon>Galagidae</taxon>
        <taxon>Otolemur</taxon>
    </lineage>
</organism>
<feature type="signal peptide" evidence="5">
    <location>
        <begin position="1"/>
        <end position="25"/>
    </location>
</feature>
<feature type="chain" id="PRO_0000226067" description="Protein Wnt-2">
    <location>
        <begin position="26"/>
        <end position="360"/>
    </location>
</feature>
<feature type="lipid moiety-binding region" description="O-palmitoleoyl serine; by PORCN" evidence="4">
    <location>
        <position position="212"/>
    </location>
</feature>
<feature type="glycosylation site" description="N-linked (GlcNAc...) asparagine" evidence="5">
    <location>
        <position position="295"/>
    </location>
</feature>
<feature type="disulfide bond" evidence="3">
    <location>
        <begin position="76"/>
        <end position="87"/>
    </location>
</feature>
<feature type="disulfide bond" evidence="3">
    <location>
        <begin position="127"/>
        <end position="135"/>
    </location>
</feature>
<feature type="disulfide bond" evidence="3">
    <location>
        <begin position="137"/>
        <end position="157"/>
    </location>
</feature>
<feature type="disulfide bond" evidence="3">
    <location>
        <begin position="206"/>
        <end position="220"/>
    </location>
</feature>
<feature type="disulfide bond" evidence="3">
    <location>
        <begin position="208"/>
        <end position="215"/>
    </location>
</feature>
<feature type="disulfide bond" evidence="3">
    <location>
        <begin position="278"/>
        <end position="309"/>
    </location>
</feature>
<feature type="disulfide bond" evidence="3">
    <location>
        <begin position="294"/>
        <end position="304"/>
    </location>
</feature>
<feature type="disulfide bond" evidence="3">
    <location>
        <begin position="308"/>
        <end position="348"/>
    </location>
</feature>
<feature type="disulfide bond" evidence="3">
    <location>
        <begin position="324"/>
        <end position="339"/>
    </location>
</feature>
<feature type="disulfide bond" evidence="3">
    <location>
        <begin position="326"/>
        <end position="336"/>
    </location>
</feature>
<feature type="disulfide bond" evidence="3">
    <location>
        <begin position="331"/>
        <end position="332"/>
    </location>
</feature>
<gene>
    <name type="primary">WNT2</name>
</gene>
<dbReference type="EMBL" id="DP000013">
    <property type="protein sequence ID" value="ABA90406.1"/>
    <property type="molecule type" value="Genomic_DNA"/>
</dbReference>
<dbReference type="RefSeq" id="XP_003789841.1">
    <property type="nucleotide sequence ID" value="XM_003789793.1"/>
</dbReference>
<dbReference type="SMR" id="Q2QLH2"/>
<dbReference type="FunCoup" id="Q2QLH2">
    <property type="interactions" value="405"/>
</dbReference>
<dbReference type="STRING" id="30611.ENSOGAP00000012163"/>
<dbReference type="GlyCosmos" id="Q2QLH2">
    <property type="glycosylation" value="1 site, No reported glycans"/>
</dbReference>
<dbReference type="Ensembl" id="ENSOGAT00000013574.2">
    <property type="protein sequence ID" value="ENSOGAP00000012163.2"/>
    <property type="gene ID" value="ENSOGAG00000013574.2"/>
</dbReference>
<dbReference type="GeneID" id="100946400"/>
<dbReference type="KEGG" id="oga:100946400"/>
<dbReference type="CTD" id="7472"/>
<dbReference type="eggNOG" id="KOG3913">
    <property type="taxonomic scope" value="Eukaryota"/>
</dbReference>
<dbReference type="GeneTree" id="ENSGT00940000159231"/>
<dbReference type="HOGENOM" id="CLU_033039_1_4_1"/>
<dbReference type="InParanoid" id="Q2QLH2"/>
<dbReference type="OMA" id="ITRMTKC"/>
<dbReference type="OrthoDB" id="5945655at2759"/>
<dbReference type="TreeFam" id="TF105310"/>
<dbReference type="Proteomes" id="UP000005225">
    <property type="component" value="Unassembled WGS sequence"/>
</dbReference>
<dbReference type="GO" id="GO:0005737">
    <property type="term" value="C:cytoplasm"/>
    <property type="evidence" value="ECO:0007669"/>
    <property type="project" value="Ensembl"/>
</dbReference>
<dbReference type="GO" id="GO:0005615">
    <property type="term" value="C:extracellular space"/>
    <property type="evidence" value="ECO:0007669"/>
    <property type="project" value="TreeGrafter"/>
</dbReference>
<dbReference type="GO" id="GO:0005125">
    <property type="term" value="F:cytokine activity"/>
    <property type="evidence" value="ECO:0007669"/>
    <property type="project" value="Ensembl"/>
</dbReference>
<dbReference type="GO" id="GO:0005109">
    <property type="term" value="F:frizzled binding"/>
    <property type="evidence" value="ECO:0007669"/>
    <property type="project" value="Ensembl"/>
</dbReference>
<dbReference type="GO" id="GO:0055009">
    <property type="term" value="P:atrial cardiac muscle tissue morphogenesis"/>
    <property type="evidence" value="ECO:0007669"/>
    <property type="project" value="Ensembl"/>
</dbReference>
<dbReference type="GO" id="GO:0060070">
    <property type="term" value="P:canonical Wnt signaling pathway"/>
    <property type="evidence" value="ECO:0007669"/>
    <property type="project" value="Ensembl"/>
</dbReference>
<dbReference type="GO" id="GO:0060317">
    <property type="term" value="P:cardiac epithelial to mesenchymal transition"/>
    <property type="evidence" value="ECO:0007669"/>
    <property type="project" value="Ensembl"/>
</dbReference>
<dbReference type="GO" id="GO:0060038">
    <property type="term" value="P:cardiac muscle cell proliferation"/>
    <property type="evidence" value="ECO:0007669"/>
    <property type="project" value="Ensembl"/>
</dbReference>
<dbReference type="GO" id="GO:0045165">
    <property type="term" value="P:cell fate commitment"/>
    <property type="evidence" value="ECO:0007669"/>
    <property type="project" value="TreeGrafter"/>
</dbReference>
<dbReference type="GO" id="GO:0033278">
    <property type="term" value="P:cell proliferation in midbrain"/>
    <property type="evidence" value="ECO:0007669"/>
    <property type="project" value="Ensembl"/>
</dbReference>
<dbReference type="GO" id="GO:0007267">
    <property type="term" value="P:cell-cell signaling"/>
    <property type="evidence" value="ECO:0007669"/>
    <property type="project" value="Ensembl"/>
</dbReference>
<dbReference type="GO" id="GO:0071560">
    <property type="term" value="P:cellular response to transforming growth factor beta stimulus"/>
    <property type="evidence" value="ECO:0007669"/>
    <property type="project" value="Ensembl"/>
</dbReference>
<dbReference type="GO" id="GO:0060502">
    <property type="term" value="P:epithelial cell proliferation involved in lung morphogenesis"/>
    <property type="evidence" value="ECO:0007669"/>
    <property type="project" value="Ensembl"/>
</dbReference>
<dbReference type="GO" id="GO:0060716">
    <property type="term" value="P:labyrinthine layer blood vessel development"/>
    <property type="evidence" value="ECO:0007669"/>
    <property type="project" value="Ensembl"/>
</dbReference>
<dbReference type="GO" id="GO:0060492">
    <property type="term" value="P:lung induction"/>
    <property type="evidence" value="ECO:0007669"/>
    <property type="project" value="Ensembl"/>
</dbReference>
<dbReference type="GO" id="GO:0061180">
    <property type="term" value="P:mammary gland epithelium development"/>
    <property type="evidence" value="ECO:0007669"/>
    <property type="project" value="Ensembl"/>
</dbReference>
<dbReference type="GO" id="GO:0010463">
    <property type="term" value="P:mesenchymal cell proliferation"/>
    <property type="evidence" value="ECO:0007669"/>
    <property type="project" value="Ensembl"/>
</dbReference>
<dbReference type="GO" id="GO:1904948">
    <property type="term" value="P:midbrain dopaminergic neuron differentiation"/>
    <property type="evidence" value="ECO:0007669"/>
    <property type="project" value="Ensembl"/>
</dbReference>
<dbReference type="GO" id="GO:0060045">
    <property type="term" value="P:positive regulation of cardiac muscle cell proliferation"/>
    <property type="evidence" value="ECO:0007669"/>
    <property type="project" value="Ensembl"/>
</dbReference>
<dbReference type="GO" id="GO:0060501">
    <property type="term" value="P:positive regulation of epithelial cell proliferation involved in lung morphogenesis"/>
    <property type="evidence" value="ECO:0007669"/>
    <property type="project" value="Ensembl"/>
</dbReference>
<dbReference type="GO" id="GO:0048146">
    <property type="term" value="P:positive regulation of fibroblast proliferation"/>
    <property type="evidence" value="ECO:0007669"/>
    <property type="project" value="Ensembl"/>
</dbReference>
<dbReference type="GO" id="GO:0002053">
    <property type="term" value="P:positive regulation of mesenchymal cell proliferation"/>
    <property type="evidence" value="ECO:0007669"/>
    <property type="project" value="Ensembl"/>
</dbReference>
<dbReference type="GO" id="GO:0050769">
    <property type="term" value="P:positive regulation of neurogenesis"/>
    <property type="evidence" value="ECO:0007669"/>
    <property type="project" value="Ensembl"/>
</dbReference>
<dbReference type="GO" id="GO:0045944">
    <property type="term" value="P:positive regulation of transcription by RNA polymerase II"/>
    <property type="evidence" value="ECO:0007669"/>
    <property type="project" value="Ensembl"/>
</dbReference>
<dbReference type="CDD" id="cd19345">
    <property type="entry name" value="Wnt_Wnt2"/>
    <property type="match status" value="1"/>
</dbReference>
<dbReference type="FunFam" id="3.30.2460.20:FF:000001">
    <property type="entry name" value="Wnt homolog"/>
    <property type="match status" value="1"/>
</dbReference>
<dbReference type="Gene3D" id="3.30.2460.20">
    <property type="match status" value="1"/>
</dbReference>
<dbReference type="InterPro" id="IPR005817">
    <property type="entry name" value="Wnt"/>
</dbReference>
<dbReference type="InterPro" id="IPR009140">
    <property type="entry name" value="Wnt2"/>
</dbReference>
<dbReference type="InterPro" id="IPR043158">
    <property type="entry name" value="Wnt_C"/>
</dbReference>
<dbReference type="InterPro" id="IPR018161">
    <property type="entry name" value="Wnt_CS"/>
</dbReference>
<dbReference type="PANTHER" id="PTHR12027:SF86">
    <property type="entry name" value="PROTEIN WNT-2"/>
    <property type="match status" value="1"/>
</dbReference>
<dbReference type="PANTHER" id="PTHR12027">
    <property type="entry name" value="WNT RELATED"/>
    <property type="match status" value="1"/>
</dbReference>
<dbReference type="Pfam" id="PF00110">
    <property type="entry name" value="wnt"/>
    <property type="match status" value="1"/>
</dbReference>
<dbReference type="PRINTS" id="PR01842">
    <property type="entry name" value="WNT2PROTEIN"/>
</dbReference>
<dbReference type="PRINTS" id="PR01349">
    <property type="entry name" value="WNTPROTEIN"/>
</dbReference>
<dbReference type="SMART" id="SM00097">
    <property type="entry name" value="WNT1"/>
    <property type="match status" value="1"/>
</dbReference>
<dbReference type="PROSITE" id="PS00246">
    <property type="entry name" value="WNT1"/>
    <property type="match status" value="1"/>
</dbReference>
<comment type="function">
    <text evidence="1 2">Ligand for members of the frizzled family of seven transmembrane receptors. Functions in the canonical Wnt signaling pathway that results in activation of transcription factors of the TCF/LEF family (By similarity). Functions as a upstream regulator of FGF10 expression. Plays an important role in embryonic lung development. May contribute to embryonic brain development by regulating the proliferation of dopaminergic precursors and neurons (By similarity).</text>
</comment>
<comment type="subcellular location">
    <subcellularLocation>
        <location evidence="1">Secreted</location>
        <location evidence="1">Extracellular space</location>
        <location evidence="1">Extracellular matrix</location>
    </subcellularLocation>
    <subcellularLocation>
        <location evidence="1">Secreted</location>
    </subcellularLocation>
</comment>
<comment type="PTM">
    <text evidence="1">Palmitoleoylation is required for efficient binding to frizzled receptors. Depalmitoleoylation leads to Wnt signaling pathway inhibition.</text>
</comment>
<comment type="similarity">
    <text evidence="6">Belongs to the Wnt family.</text>
</comment>
<proteinExistence type="inferred from homology"/>